<feature type="chain" id="PRO_0000278722" description="Protein PB1-F2">
    <location>
        <begin position="1"/>
        <end position="90"/>
    </location>
</feature>
<feature type="region of interest" description="Disordered" evidence="2">
    <location>
        <begin position="1"/>
        <end position="33"/>
    </location>
</feature>
<feature type="region of interest" description="Mitochondrial targeting sequence" evidence="1">
    <location>
        <begin position="65"/>
        <end position="87"/>
    </location>
</feature>
<feature type="compositionally biased region" description="Basic and acidic residues" evidence="2">
    <location>
        <begin position="17"/>
        <end position="33"/>
    </location>
</feature>
<feature type="site" description="Low pathogenicity" evidence="1">
    <location>
        <position position="66"/>
    </location>
</feature>
<organism>
    <name type="scientific">Influenza A virus (strain A/Turkey/Ireland/1378/1983 H5N8)</name>
    <dbReference type="NCBI Taxonomy" id="380285"/>
    <lineage>
        <taxon>Viruses</taxon>
        <taxon>Riboviria</taxon>
        <taxon>Orthornavirae</taxon>
        <taxon>Negarnaviricota</taxon>
        <taxon>Polyploviricotina</taxon>
        <taxon>Insthoviricetes</taxon>
        <taxon>Articulavirales</taxon>
        <taxon>Orthomyxoviridae</taxon>
        <taxon>Alphainfluenzavirus</taxon>
        <taxon>Alphainfluenzavirus influenzae</taxon>
        <taxon>Influenza A virus</taxon>
    </lineage>
</organism>
<evidence type="ECO:0000255" key="1">
    <source>
        <dbReference type="HAMAP-Rule" id="MF_04064"/>
    </source>
</evidence>
<evidence type="ECO:0000256" key="2">
    <source>
        <dbReference type="SAM" id="MobiDB-lite"/>
    </source>
</evidence>
<protein>
    <recommendedName>
        <fullName evidence="1">Protein PB1-F2</fullName>
    </recommendedName>
</protein>
<name>PB1F2_I83A4</name>
<gene>
    <name evidence="1" type="primary">PB1</name>
</gene>
<keyword id="KW-0053">Apoptosis</keyword>
<keyword id="KW-1035">Host cytoplasm</keyword>
<keyword id="KW-1043">Host membrane</keyword>
<keyword id="KW-1045">Host mitochondrion</keyword>
<keyword id="KW-1046">Host mitochondrion inner membrane</keyword>
<keyword id="KW-1048">Host nucleus</keyword>
<keyword id="KW-0945">Host-virus interaction</keyword>
<keyword id="KW-1090">Inhibition of host innate immune response by virus</keyword>
<keyword id="KW-1097">Inhibition of host MAVS by virus</keyword>
<keyword id="KW-1113">Inhibition of host RLR pathway by virus</keyword>
<keyword id="KW-0472">Membrane</keyword>
<keyword id="KW-1119">Modulation of host cell apoptosis by virus</keyword>
<keyword id="KW-0899">Viral immunoevasion</keyword>
<sequence length="90" mass="10903">MEQEQDIPWTQSAEHTNIQKRESGQQTQRLEHPSLTRLMDHYQRTMSQADMHRQIVSWRQWLSLKNPTQGSLKTRVLKRWKLFSKQGWTN</sequence>
<comment type="function">
    <text evidence="1">Plays an important role in promoting lung pathology in both primary viral infection and secondary bacterial infection. Promotes alteration of mitochondrial morphology, dissipation of mitochondrial membrane potential, and cell death. Alternatively, inhibits the production of interferon in the infected cell at the level of host mitochondrial antiviral signaling MAVS. Its level of expression differs greatly depending on which cell type is infected, in a manner that is independent of the levels of expression of other viral proteins. Monocytic cells are more affected than epithelial cells. Seems to disable virus-infected monocytes or other host innate immune cells. During early stage of infection, predisposes the mitochondria to permeability transition through interaction with host SLC25A6/ANT3 and VDAC1. These proteins participate in the formation of the permeability transition pore complex (PTPC) responsible of the release of mitochondrial products that triggers apoptosis.</text>
</comment>
<comment type="subunit">
    <text evidence="1">Oligomer. Interacts with human SLC25A6/ANT3 and VDAC1. Interacts with host MAVS.</text>
</comment>
<comment type="subcellular location">
    <subcellularLocation>
        <location evidence="1">Host mitochondrion inner membrane</location>
    </subcellularLocation>
    <subcellularLocation>
        <location evidence="1">Host nucleus</location>
    </subcellularLocation>
    <subcellularLocation>
        <location evidence="1">Host cytoplasm</location>
        <location evidence="1">Host cytosol</location>
    </subcellularLocation>
    <text evidence="1">Inner mitochondrial membrane in most cells types. Otherwise is detected in the nucleus and cytosol.</text>
</comment>
<comment type="miscellaneous">
    <text>Is not encoded in all strains, and seems to be dispensable for replication.</text>
</comment>
<comment type="similarity">
    <text evidence="1">Belongs to the influenza viruses PB1-F2 family.</text>
</comment>
<dbReference type="EMBL" id="CY015095">
    <property type="protein sequence ID" value="ABI85126.1"/>
    <property type="molecule type" value="Genomic_RNA"/>
</dbReference>
<dbReference type="SMR" id="Q0A2F6"/>
<dbReference type="Proteomes" id="UP000008583">
    <property type="component" value="Genome"/>
</dbReference>
<dbReference type="GO" id="GO:0044164">
    <property type="term" value="C:host cell cytosol"/>
    <property type="evidence" value="ECO:0007669"/>
    <property type="project" value="UniProtKB-SubCell"/>
</dbReference>
<dbReference type="GO" id="GO:0044192">
    <property type="term" value="C:host cell mitochondrial inner membrane"/>
    <property type="evidence" value="ECO:0007669"/>
    <property type="project" value="UniProtKB-SubCell"/>
</dbReference>
<dbReference type="GO" id="GO:0042025">
    <property type="term" value="C:host cell nucleus"/>
    <property type="evidence" value="ECO:0007669"/>
    <property type="project" value="UniProtKB-SubCell"/>
</dbReference>
<dbReference type="GO" id="GO:0016020">
    <property type="term" value="C:membrane"/>
    <property type="evidence" value="ECO:0007669"/>
    <property type="project" value="UniProtKB-UniRule"/>
</dbReference>
<dbReference type="GO" id="GO:0052150">
    <property type="term" value="P:symbiont-mediated perturbation of host apoptosis"/>
    <property type="evidence" value="ECO:0007669"/>
    <property type="project" value="UniProtKB-KW"/>
</dbReference>
<dbReference type="GO" id="GO:0039545">
    <property type="term" value="P:symbiont-mediated suppression of host cytoplasmic pattern recognition receptor signaling pathway via inhibition of MAVS activity"/>
    <property type="evidence" value="ECO:0007669"/>
    <property type="project" value="UniProtKB-KW"/>
</dbReference>
<dbReference type="HAMAP" id="MF_04064">
    <property type="entry name" value="INFV_PB1F2"/>
    <property type="match status" value="1"/>
</dbReference>
<dbReference type="InterPro" id="IPR021045">
    <property type="entry name" value="Flu_proapoptotic_PB1-F2"/>
</dbReference>
<dbReference type="Pfam" id="PF11986">
    <property type="entry name" value="PB1-F2"/>
    <property type="match status" value="1"/>
</dbReference>
<proteinExistence type="inferred from homology"/>
<organismHost>
    <name type="scientific">Aves</name>
    <dbReference type="NCBI Taxonomy" id="8782"/>
</organismHost>
<reference key="1">
    <citation type="journal article" date="2006" name="Science">
        <title>Large-scale sequence analysis of avian influenza isolates.</title>
        <authorList>
            <person name="Obenauer J.C."/>
            <person name="Denson J."/>
            <person name="Mehta P.K."/>
            <person name="Su X."/>
            <person name="Mukatira S."/>
            <person name="Finkelstein D.B."/>
            <person name="Xu X."/>
            <person name="Wang J."/>
            <person name="Ma J."/>
            <person name="Fan Y."/>
            <person name="Rakestraw K.M."/>
            <person name="Webster R.G."/>
            <person name="Hoffmann E."/>
            <person name="Krauss S."/>
            <person name="Zheng J."/>
            <person name="Zhang Z."/>
            <person name="Naeve C.W."/>
        </authorList>
    </citation>
    <scope>NUCLEOTIDE SEQUENCE [GENOMIC RNA]</scope>
</reference>
<accession>Q0A2F6</accession>